<protein>
    <recommendedName>
        <fullName evidence="1">ATP synthase gamma chain</fullName>
    </recommendedName>
    <alternativeName>
        <fullName evidence="1">ATP synthase F1 sector gamma subunit</fullName>
    </alternativeName>
    <alternativeName>
        <fullName evidence="1">F-ATPase gamma subunit</fullName>
    </alternativeName>
</protein>
<name>ATPG_FRATM</name>
<dbReference type="EMBL" id="CP000915">
    <property type="protein sequence ID" value="ACD30225.1"/>
    <property type="molecule type" value="Genomic_DNA"/>
</dbReference>
<dbReference type="SMR" id="B2SEY0"/>
<dbReference type="KEGG" id="ftm:FTM_0127"/>
<dbReference type="HOGENOM" id="CLU_050669_0_1_6"/>
<dbReference type="GO" id="GO:0005886">
    <property type="term" value="C:plasma membrane"/>
    <property type="evidence" value="ECO:0007669"/>
    <property type="project" value="UniProtKB-SubCell"/>
</dbReference>
<dbReference type="GO" id="GO:0045259">
    <property type="term" value="C:proton-transporting ATP synthase complex"/>
    <property type="evidence" value="ECO:0007669"/>
    <property type="project" value="UniProtKB-KW"/>
</dbReference>
<dbReference type="GO" id="GO:0005524">
    <property type="term" value="F:ATP binding"/>
    <property type="evidence" value="ECO:0007669"/>
    <property type="project" value="UniProtKB-UniRule"/>
</dbReference>
<dbReference type="GO" id="GO:0046933">
    <property type="term" value="F:proton-transporting ATP synthase activity, rotational mechanism"/>
    <property type="evidence" value="ECO:0007669"/>
    <property type="project" value="UniProtKB-UniRule"/>
</dbReference>
<dbReference type="GO" id="GO:0042777">
    <property type="term" value="P:proton motive force-driven plasma membrane ATP synthesis"/>
    <property type="evidence" value="ECO:0007669"/>
    <property type="project" value="UniProtKB-UniRule"/>
</dbReference>
<dbReference type="CDD" id="cd12151">
    <property type="entry name" value="F1-ATPase_gamma"/>
    <property type="match status" value="1"/>
</dbReference>
<dbReference type="Gene3D" id="3.40.1380.10">
    <property type="match status" value="1"/>
</dbReference>
<dbReference type="Gene3D" id="1.10.287.80">
    <property type="entry name" value="ATP synthase, gamma subunit, helix hairpin domain"/>
    <property type="match status" value="1"/>
</dbReference>
<dbReference type="HAMAP" id="MF_00815">
    <property type="entry name" value="ATP_synth_gamma_bact"/>
    <property type="match status" value="1"/>
</dbReference>
<dbReference type="InterPro" id="IPR035968">
    <property type="entry name" value="ATP_synth_F1_ATPase_gsu"/>
</dbReference>
<dbReference type="InterPro" id="IPR000131">
    <property type="entry name" value="ATP_synth_F1_gsu"/>
</dbReference>
<dbReference type="InterPro" id="IPR023632">
    <property type="entry name" value="ATP_synth_F1_gsu_CS"/>
</dbReference>
<dbReference type="NCBIfam" id="TIGR01146">
    <property type="entry name" value="ATPsyn_F1gamma"/>
    <property type="match status" value="1"/>
</dbReference>
<dbReference type="NCBIfam" id="NF009956">
    <property type="entry name" value="PRK13422.1"/>
    <property type="match status" value="1"/>
</dbReference>
<dbReference type="PANTHER" id="PTHR11693">
    <property type="entry name" value="ATP SYNTHASE GAMMA CHAIN"/>
    <property type="match status" value="1"/>
</dbReference>
<dbReference type="PANTHER" id="PTHR11693:SF22">
    <property type="entry name" value="ATP SYNTHASE SUBUNIT GAMMA, MITOCHONDRIAL"/>
    <property type="match status" value="1"/>
</dbReference>
<dbReference type="Pfam" id="PF00231">
    <property type="entry name" value="ATP-synt"/>
    <property type="match status" value="1"/>
</dbReference>
<dbReference type="PRINTS" id="PR00126">
    <property type="entry name" value="ATPASEGAMMA"/>
</dbReference>
<dbReference type="SUPFAM" id="SSF52943">
    <property type="entry name" value="ATP synthase (F1-ATPase), gamma subunit"/>
    <property type="match status" value="1"/>
</dbReference>
<dbReference type="PROSITE" id="PS00153">
    <property type="entry name" value="ATPASE_GAMMA"/>
    <property type="match status" value="1"/>
</dbReference>
<accession>B2SEY0</accession>
<proteinExistence type="inferred from homology"/>
<sequence>MSNAREIRSKVQSVKNTQKITGAMELVAASKMRGAIVKMNNVRPYVESANTIIKNVTAASIDYPNPYLFDRDVKRVGYIVISTDRGLCGGLNINLFKHVLKEIKNNIEDRVGVDVCVIGSKAENFFAKLKDVNIVATAHYNDKDKEGSIRAIGGAVKVMLDKFTAGEIDRLYMSSNQFVSTIKQRPRLQTLLPIQDIFSAEEIKANKEKATKGHWDYIYERDIEEVLNALCIRYIEAQVRGAILENAACEQAARMMAMKNATDNASDIIDQLKLDYNKVRQAMITQELAEICSGAAAV</sequence>
<organism>
    <name type="scientific">Francisella tularensis subsp. mediasiatica (strain FSC147)</name>
    <dbReference type="NCBI Taxonomy" id="441952"/>
    <lineage>
        <taxon>Bacteria</taxon>
        <taxon>Pseudomonadati</taxon>
        <taxon>Pseudomonadota</taxon>
        <taxon>Gammaproteobacteria</taxon>
        <taxon>Thiotrichales</taxon>
        <taxon>Francisellaceae</taxon>
        <taxon>Francisella</taxon>
    </lineage>
</organism>
<gene>
    <name evidence="1" type="primary">atpG</name>
    <name type="ordered locus">FTM_0127</name>
</gene>
<reference key="1">
    <citation type="journal article" date="2009" name="PLoS Pathog.">
        <title>Molecular evolutionary consequences of niche restriction in Francisella tularensis, a facultative intracellular pathogen.</title>
        <authorList>
            <person name="Larsson P."/>
            <person name="Elfsmark D."/>
            <person name="Svensson K."/>
            <person name="Wikstroem P."/>
            <person name="Forsman M."/>
            <person name="Brettin T."/>
            <person name="Keim P."/>
            <person name="Johansson A."/>
        </authorList>
    </citation>
    <scope>NUCLEOTIDE SEQUENCE [LARGE SCALE GENOMIC DNA]</scope>
    <source>
        <strain>FSC147</strain>
    </source>
</reference>
<evidence type="ECO:0000255" key="1">
    <source>
        <dbReference type="HAMAP-Rule" id="MF_00815"/>
    </source>
</evidence>
<keyword id="KW-0066">ATP synthesis</keyword>
<keyword id="KW-0997">Cell inner membrane</keyword>
<keyword id="KW-1003">Cell membrane</keyword>
<keyword id="KW-0139">CF(1)</keyword>
<keyword id="KW-0375">Hydrogen ion transport</keyword>
<keyword id="KW-0406">Ion transport</keyword>
<keyword id="KW-0472">Membrane</keyword>
<keyword id="KW-0813">Transport</keyword>
<comment type="function">
    <text evidence="1">Produces ATP from ADP in the presence of a proton gradient across the membrane. The gamma chain is believed to be important in regulating ATPase activity and the flow of protons through the CF(0) complex.</text>
</comment>
<comment type="subunit">
    <text evidence="1">F-type ATPases have 2 components, CF(1) - the catalytic core - and CF(0) - the membrane proton channel. CF(1) has five subunits: alpha(3), beta(3), gamma(1), delta(1), epsilon(1). CF(0) has three main subunits: a, b and c.</text>
</comment>
<comment type="subcellular location">
    <subcellularLocation>
        <location evidence="1">Cell inner membrane</location>
        <topology evidence="1">Peripheral membrane protein</topology>
    </subcellularLocation>
</comment>
<comment type="similarity">
    <text evidence="1">Belongs to the ATPase gamma chain family.</text>
</comment>
<feature type="chain" id="PRO_1000134155" description="ATP synthase gamma chain">
    <location>
        <begin position="1"/>
        <end position="298"/>
    </location>
</feature>